<proteinExistence type="evidence at transcript level"/>
<organism>
    <name type="scientific">Brassica napus</name>
    <name type="common">Rape</name>
    <dbReference type="NCBI Taxonomy" id="3708"/>
    <lineage>
        <taxon>Eukaryota</taxon>
        <taxon>Viridiplantae</taxon>
        <taxon>Streptophyta</taxon>
        <taxon>Embryophyta</taxon>
        <taxon>Tracheophyta</taxon>
        <taxon>Spermatophyta</taxon>
        <taxon>Magnoliopsida</taxon>
        <taxon>eudicotyledons</taxon>
        <taxon>Gunneridae</taxon>
        <taxon>Pentapetalae</taxon>
        <taxon>rosids</taxon>
        <taxon>malvids</taxon>
        <taxon>Brassicales</taxon>
        <taxon>Brassicaceae</taxon>
        <taxon>Brassiceae</taxon>
        <taxon>Brassica</taxon>
    </lineage>
</organism>
<sequence>MSIYLRWSLEHGKSNSNSNGIINQQDERFNIFKDNLRFIDLHNENNKNATYKLGLTIFANLTNDEYRSLYLGARTEPVRRITKAKNVNMKYSAAVNVDEVPVTVDWRQKGAVNAIKDQGTCGSCWAFSTAAAVEGINKIVTGELVSLSEQELVDCDKSYNQGCNGGLMDYAFQFIMKNGGLNTEKDYPYHGTNGKCNSLLKNSRVVTIDGYEDVPSKDETALKRAVSYQPVSVAIDAGGRAFQHYQSGIFTGKCGTNMDHAVVAVGYGSENGVDYWIVRNSWGTRWGEDGYIRMERNVASKSGKCGIAIEASYPVKYSPNPVRGTSSV</sequence>
<comment type="function">
    <text>May function in an early event in cortical cell differentiation.</text>
</comment>
<comment type="tissue specificity">
    <text>Present in both cotyledons and axes.</text>
</comment>
<comment type="developmental stage">
    <text>Expressed maximally during postgerminative growth.</text>
</comment>
<comment type="similarity">
    <text evidence="6 7 8">Belongs to the peptidase C1 family.</text>
</comment>
<keyword id="KW-1015">Disulfide bond</keyword>
<keyword id="KW-0309">Germination</keyword>
<keyword id="KW-0325">Glycoprotein</keyword>
<keyword id="KW-0378">Hydrolase</keyword>
<keyword id="KW-0645">Protease</keyword>
<keyword id="KW-0788">Thiol protease</keyword>
<keyword id="KW-0865">Zymogen</keyword>
<accession>P25251</accession>
<feature type="propeptide" id="PRO_0000026402" description="Activation peptide" evidence="1">
    <location>
        <begin position="1" status="less than"/>
        <end position="99"/>
    </location>
</feature>
<feature type="chain" id="PRO_0000026403" description="Cysteine proteinase COT44">
    <location>
        <begin position="100"/>
        <end position="328"/>
    </location>
</feature>
<feature type="active site" evidence="6">
    <location>
        <position position="124"/>
    </location>
</feature>
<feature type="active site" evidence="7">
    <location>
        <position position="260"/>
    </location>
</feature>
<feature type="active site" evidence="8">
    <location>
        <position position="280"/>
    </location>
</feature>
<feature type="glycosylation site" description="N-linked (GlcNAc...) asparagine" evidence="5">
    <location>
        <position position="48"/>
    </location>
</feature>
<feature type="glycosylation site" description="N-linked (GlcNAc...) asparagine" evidence="5">
    <location>
        <position position="60"/>
    </location>
</feature>
<feature type="disulfide bond" evidence="2">
    <location>
        <begin position="121"/>
        <end position="163"/>
    </location>
</feature>
<feature type="disulfide bond" evidence="3">
    <location>
        <begin position="155"/>
        <end position="196"/>
    </location>
</feature>
<feature type="disulfide bond" evidence="3">
    <location>
        <begin position="254"/>
        <end position="305"/>
    </location>
</feature>
<feature type="non-terminal residue">
    <location>
        <position position="1"/>
    </location>
</feature>
<evidence type="ECO:0000250" key="1">
    <source>
        <dbReference type="UniProtKB" id="P00785"/>
    </source>
</evidence>
<evidence type="ECO:0000250" key="2">
    <source>
        <dbReference type="UniProtKB" id="P07858"/>
    </source>
</evidence>
<evidence type="ECO:0000250" key="3">
    <source>
        <dbReference type="UniProtKB" id="P25250"/>
    </source>
</evidence>
<evidence type="ECO:0000250" key="4">
    <source>
        <dbReference type="UniProtKB" id="P80884"/>
    </source>
</evidence>
<evidence type="ECO:0000255" key="5">
    <source>
        <dbReference type="PROSITE-ProRule" id="PRU00498"/>
    </source>
</evidence>
<evidence type="ECO:0000255" key="6">
    <source>
        <dbReference type="PROSITE-ProRule" id="PRU10088"/>
    </source>
</evidence>
<evidence type="ECO:0000255" key="7">
    <source>
        <dbReference type="PROSITE-ProRule" id="PRU10089"/>
    </source>
</evidence>
<evidence type="ECO:0000255" key="8">
    <source>
        <dbReference type="PROSITE-ProRule" id="PRU10090"/>
    </source>
</evidence>
<reference key="1">
    <citation type="journal article" date="1989" name="Plant Cell">
        <title>Spatial patterns of gene expression in Brassica napus seedlings: identification of a cortex-specific gene and localization of mRNAs encoding isocitrate lyase and a polypeptide homologous to proteinases.</title>
        <authorList>
            <person name="Dietrich R.A."/>
            <person name="Maslyar D.J."/>
            <person name="Heupel R.C."/>
            <person name="Harada J.J."/>
        </authorList>
    </citation>
    <scope>NUCLEOTIDE SEQUENCE</scope>
    <source>
        <tissue>Seed</tissue>
    </source>
</reference>
<protein>
    <recommendedName>
        <fullName>Cysteine proteinase COT44</fullName>
        <ecNumber evidence="4">3.4.22.-</ecNumber>
    </recommendedName>
</protein>
<name>CYSP4_BRANA</name>
<dbReference type="EC" id="3.4.22.-" evidence="4"/>
<dbReference type="PIR" id="JQ1121">
    <property type="entry name" value="JQ1121"/>
</dbReference>
<dbReference type="SMR" id="P25251"/>
<dbReference type="MEROPS" id="C01.021"/>
<dbReference type="GO" id="GO:0008234">
    <property type="term" value="F:cysteine-type peptidase activity"/>
    <property type="evidence" value="ECO:0007669"/>
    <property type="project" value="UniProtKB-KW"/>
</dbReference>
<dbReference type="GO" id="GO:0006508">
    <property type="term" value="P:proteolysis"/>
    <property type="evidence" value="ECO:0007669"/>
    <property type="project" value="UniProtKB-KW"/>
</dbReference>
<dbReference type="CDD" id="cd02248">
    <property type="entry name" value="Peptidase_C1A"/>
    <property type="match status" value="1"/>
</dbReference>
<dbReference type="FunFam" id="3.90.70.10:FF:000068">
    <property type="entry name" value="Cysteine protease 1"/>
    <property type="match status" value="1"/>
</dbReference>
<dbReference type="Gene3D" id="3.90.70.10">
    <property type="entry name" value="Cysteine proteinases"/>
    <property type="match status" value="1"/>
</dbReference>
<dbReference type="InterPro" id="IPR038765">
    <property type="entry name" value="Papain-like_cys_pep_sf"/>
</dbReference>
<dbReference type="InterPro" id="IPR025661">
    <property type="entry name" value="Pept_asp_AS"/>
</dbReference>
<dbReference type="InterPro" id="IPR000169">
    <property type="entry name" value="Pept_cys_AS"/>
</dbReference>
<dbReference type="InterPro" id="IPR025660">
    <property type="entry name" value="Pept_his_AS"/>
</dbReference>
<dbReference type="InterPro" id="IPR013128">
    <property type="entry name" value="Peptidase_C1A"/>
</dbReference>
<dbReference type="InterPro" id="IPR000668">
    <property type="entry name" value="Peptidase_C1A_C"/>
</dbReference>
<dbReference type="InterPro" id="IPR039417">
    <property type="entry name" value="Peptidase_C1A_papain-like"/>
</dbReference>
<dbReference type="InterPro" id="IPR013201">
    <property type="entry name" value="Prot_inhib_I29"/>
</dbReference>
<dbReference type="PANTHER" id="PTHR12411">
    <property type="entry name" value="CYSTEINE PROTEASE FAMILY C1-RELATED"/>
    <property type="match status" value="1"/>
</dbReference>
<dbReference type="Pfam" id="PF08246">
    <property type="entry name" value="Inhibitor_I29"/>
    <property type="match status" value="1"/>
</dbReference>
<dbReference type="Pfam" id="PF00112">
    <property type="entry name" value="Peptidase_C1"/>
    <property type="match status" value="1"/>
</dbReference>
<dbReference type="PRINTS" id="PR00705">
    <property type="entry name" value="PAPAIN"/>
</dbReference>
<dbReference type="SMART" id="SM00848">
    <property type="entry name" value="Inhibitor_I29"/>
    <property type="match status" value="1"/>
</dbReference>
<dbReference type="SMART" id="SM00645">
    <property type="entry name" value="Pept_C1"/>
    <property type="match status" value="1"/>
</dbReference>
<dbReference type="SUPFAM" id="SSF54001">
    <property type="entry name" value="Cysteine proteinases"/>
    <property type="match status" value="1"/>
</dbReference>
<dbReference type="PROSITE" id="PS00640">
    <property type="entry name" value="THIOL_PROTEASE_ASN"/>
    <property type="match status" value="1"/>
</dbReference>
<dbReference type="PROSITE" id="PS00139">
    <property type="entry name" value="THIOL_PROTEASE_CYS"/>
    <property type="match status" value="1"/>
</dbReference>
<dbReference type="PROSITE" id="PS00639">
    <property type="entry name" value="THIOL_PROTEASE_HIS"/>
    <property type="match status" value="1"/>
</dbReference>